<proteinExistence type="evidence at transcript level"/>
<dbReference type="EMBL" id="AK030147">
    <property type="protein sequence ID" value="BAC26809.1"/>
    <property type="molecule type" value="mRNA"/>
</dbReference>
<dbReference type="EMBL" id="AK030220">
    <property type="protein sequence ID" value="BAC26851.1"/>
    <property type="molecule type" value="mRNA"/>
</dbReference>
<dbReference type="EMBL" id="BC049813">
    <property type="protein sequence ID" value="AAH49813.1"/>
    <property type="molecule type" value="mRNA"/>
</dbReference>
<dbReference type="CCDS" id="CCDS20890.1"/>
<dbReference type="RefSeq" id="NP_780739.1">
    <property type="nucleotide sequence ID" value="NM_175530.3"/>
</dbReference>
<dbReference type="RefSeq" id="XP_006539998.1">
    <property type="nucleotide sequence ID" value="XM_006539935.4"/>
</dbReference>
<dbReference type="RefSeq" id="XP_006539999.1">
    <property type="nucleotide sequence ID" value="XM_006539936.4"/>
</dbReference>
<dbReference type="RefSeq" id="XP_006540000.1">
    <property type="nucleotide sequence ID" value="XM_006539937.4"/>
</dbReference>
<dbReference type="BioGRID" id="232572">
    <property type="interactions" value="1"/>
</dbReference>
<dbReference type="FunCoup" id="Q8BG80">
    <property type="interactions" value="163"/>
</dbReference>
<dbReference type="STRING" id="10090.ENSMUSP00000055692"/>
<dbReference type="GlyGen" id="Q8BG80">
    <property type="glycosylation" value="1 site"/>
</dbReference>
<dbReference type="iPTMnet" id="Q8BG80"/>
<dbReference type="PhosphoSitePlus" id="Q8BG80"/>
<dbReference type="jPOST" id="Q8BG80"/>
<dbReference type="PaxDb" id="10090-ENSMUSP00000055692"/>
<dbReference type="PeptideAtlas" id="Q8BG80"/>
<dbReference type="ProteomicsDB" id="267354"/>
<dbReference type="Antibodypedia" id="31380">
    <property type="antibodies" value="68 antibodies from 14 providers"/>
</dbReference>
<dbReference type="Ensembl" id="ENSMUST00000053109.5">
    <property type="protein sequence ID" value="ENSMUSP00000055692.4"/>
    <property type="gene ID" value="ENSMUSG00000050428.8"/>
</dbReference>
<dbReference type="Ensembl" id="ENSMUST00000165913.2">
    <property type="protein sequence ID" value="ENSMUSP00000129427.2"/>
    <property type="gene ID" value="ENSMUSG00000050428.8"/>
</dbReference>
<dbReference type="GeneID" id="243867"/>
<dbReference type="KEGG" id="mmu:243867"/>
<dbReference type="UCSC" id="uc009fkt.2">
    <property type="organism name" value="mouse"/>
</dbReference>
<dbReference type="AGR" id="MGI:2444918"/>
<dbReference type="CTD" id="23403"/>
<dbReference type="MGI" id="MGI:2444918">
    <property type="gene designation" value="Fbxo46"/>
</dbReference>
<dbReference type="VEuPathDB" id="HostDB:ENSMUSG00000050428"/>
<dbReference type="eggNOG" id="KOG4564">
    <property type="taxonomic scope" value="Eukaryota"/>
</dbReference>
<dbReference type="GeneTree" id="ENSGT00530000064222"/>
<dbReference type="HOGENOM" id="CLU_028677_0_0_1"/>
<dbReference type="InParanoid" id="Q8BG80"/>
<dbReference type="OMA" id="CHYFKSI"/>
<dbReference type="OrthoDB" id="10052741at2759"/>
<dbReference type="PhylomeDB" id="Q8BG80"/>
<dbReference type="TreeFam" id="TF331673"/>
<dbReference type="UniPathway" id="UPA00143"/>
<dbReference type="BioGRID-ORCS" id="243867">
    <property type="hits" value="3 hits in 77 CRISPR screens"/>
</dbReference>
<dbReference type="PRO" id="PR:Q8BG80"/>
<dbReference type="Proteomes" id="UP000000589">
    <property type="component" value="Chromosome 7"/>
</dbReference>
<dbReference type="RNAct" id="Q8BG80">
    <property type="molecule type" value="protein"/>
</dbReference>
<dbReference type="Bgee" id="ENSMUSG00000050428">
    <property type="expression patterns" value="Expressed in granulocyte and 107 other cell types or tissues"/>
</dbReference>
<dbReference type="GO" id="GO:0019005">
    <property type="term" value="C:SCF ubiquitin ligase complex"/>
    <property type="evidence" value="ECO:0000250"/>
    <property type="project" value="UniProtKB"/>
</dbReference>
<dbReference type="GO" id="GO:1990756">
    <property type="term" value="F:ubiquitin-like ligase-substrate adaptor activity"/>
    <property type="evidence" value="ECO:0000250"/>
    <property type="project" value="UniProtKB"/>
</dbReference>
<dbReference type="GO" id="GO:0031146">
    <property type="term" value="P:SCF-dependent proteasomal ubiquitin-dependent protein catabolic process"/>
    <property type="evidence" value="ECO:0000250"/>
    <property type="project" value="UniProtKB"/>
</dbReference>
<dbReference type="CDD" id="cd22177">
    <property type="entry name" value="F-box_FBXO46"/>
    <property type="match status" value="1"/>
</dbReference>
<dbReference type="Gene3D" id="1.20.1280.50">
    <property type="match status" value="1"/>
</dbReference>
<dbReference type="InterPro" id="IPR036047">
    <property type="entry name" value="F-box-like_dom_sf"/>
</dbReference>
<dbReference type="InterPro" id="IPR001810">
    <property type="entry name" value="F-box_dom"/>
</dbReference>
<dbReference type="InterPro" id="IPR039594">
    <property type="entry name" value="FBXO34/46"/>
</dbReference>
<dbReference type="PANTHER" id="PTHR16271">
    <property type="entry name" value="F-BOX ONLY PROTEIN 34/46 FAMILY MEMBER"/>
    <property type="match status" value="1"/>
</dbReference>
<dbReference type="PANTHER" id="PTHR16271:SF10">
    <property type="entry name" value="F-BOX ONLY PROTEIN 46"/>
    <property type="match status" value="1"/>
</dbReference>
<dbReference type="Pfam" id="PF12937">
    <property type="entry name" value="F-box-like"/>
    <property type="match status" value="1"/>
</dbReference>
<dbReference type="SMART" id="SM00256">
    <property type="entry name" value="FBOX"/>
    <property type="match status" value="1"/>
</dbReference>
<dbReference type="SUPFAM" id="SSF81383">
    <property type="entry name" value="F-box domain"/>
    <property type="match status" value="1"/>
</dbReference>
<dbReference type="PROSITE" id="PS50181">
    <property type="entry name" value="FBOX"/>
    <property type="match status" value="1"/>
</dbReference>
<name>FBX46_MOUSE</name>
<evidence type="ECO:0000250" key="1">
    <source>
        <dbReference type="UniProtKB" id="Q5XUX0"/>
    </source>
</evidence>
<evidence type="ECO:0000250" key="2">
    <source>
        <dbReference type="UniProtKB" id="Q6PJ61"/>
    </source>
</evidence>
<evidence type="ECO:0000255" key="3">
    <source>
        <dbReference type="PROSITE-ProRule" id="PRU00080"/>
    </source>
</evidence>
<evidence type="ECO:0000256" key="4">
    <source>
        <dbReference type="SAM" id="MobiDB-lite"/>
    </source>
</evidence>
<sequence length="603" mass="65294">MDRGSLLPFQLWCPRPFSKYSQNQPRPPSTALKPPVCPDTSSGTEPDHRPAHLESTPPAVAAEAPTSQPAPLLSTAASGDEGRVLLDTWYVIKPGNTKEKVAFFVAHQCGGSSRASSMKVKGHWGSDSSKAKRRRRCLEPTKAPPDQGGREGTPATEVTPTSSGDDVDLVSVAEMVALVEQRAALALQSYPRPSTPAPVVFVSADQGGPAKGLGSERRSGGGDCSRVAEAVAHFEAQRDSPPTKGLRKEERPGPGPGEVRIAFRISNVREPHSPDGNLPNGGGGRPGCAYPGSPGPGTRAKDKITCDLYQLISPSRDALPSNVEFLLARADEASEGETPAPTRPEDTPPAPPPPPARDCGASGFHVDVVVTGVVDACIFFGKDGTKNVKEETVCLTVSPEEPPPPGQLFFLQSRGPEGPPEPPPADIPSTVPGPDDSEGTTDTSLCRLYRHVSHDFLEIRFKIQRLLEPRQYMLLLPEHVLVKIFSFLPTRALAALKCTCHHFKGIIEAFGVRATDSRWSRDPLYRDDPCKQCRKRYEKGDVSLCRWHPKPYHHDLPYGRSYWMCCRRADRETPGCRLGLHDNNWVLPCNGVGGGRAGREEGR</sequence>
<organism>
    <name type="scientific">Mus musculus</name>
    <name type="common">Mouse</name>
    <dbReference type="NCBI Taxonomy" id="10090"/>
    <lineage>
        <taxon>Eukaryota</taxon>
        <taxon>Metazoa</taxon>
        <taxon>Chordata</taxon>
        <taxon>Craniata</taxon>
        <taxon>Vertebrata</taxon>
        <taxon>Euteleostomi</taxon>
        <taxon>Mammalia</taxon>
        <taxon>Eutheria</taxon>
        <taxon>Euarchontoglires</taxon>
        <taxon>Glires</taxon>
        <taxon>Rodentia</taxon>
        <taxon>Myomorpha</taxon>
        <taxon>Muroidea</taxon>
        <taxon>Muridae</taxon>
        <taxon>Murinae</taxon>
        <taxon>Mus</taxon>
        <taxon>Mus</taxon>
    </lineage>
</organism>
<comment type="function">
    <text evidence="2">Substrate-recognition component of the SCF(FBXO46) protein ligase complex, which mediates the ubiquitination and degradation of target proteins. In absence of stress, the SCF(FBXO46) complex catalyzes ubiquitination and degradation of MTOR-phosphorylated FBXO31.</text>
</comment>
<comment type="pathway">
    <text evidence="2">Protein modification; protein ubiquitination.</text>
</comment>
<comment type="subunit">
    <text evidence="1">Part of a SCF (SKP1-cullin-F-box) protein ligase complex SCF(FBXO46) composed of CUL1, SKP1, RBX1 and FBXO46.</text>
</comment>
<comment type="PTM">
    <text evidence="2">Phosphorylated by ATM in response to DNA damage, promoting ubiquitination and degradation by the SCF(FBXO31) complex.</text>
</comment>
<comment type="PTM">
    <text evidence="2">ATM-phosphorylated FBXO46 is ubiquitinated and degradaded by the SCF(FBXO31) complex in response to DNA damage.</text>
</comment>
<reference key="1">
    <citation type="journal article" date="2005" name="Science">
        <title>The transcriptional landscape of the mammalian genome.</title>
        <authorList>
            <person name="Carninci P."/>
            <person name="Kasukawa T."/>
            <person name="Katayama S."/>
            <person name="Gough J."/>
            <person name="Frith M.C."/>
            <person name="Maeda N."/>
            <person name="Oyama R."/>
            <person name="Ravasi T."/>
            <person name="Lenhard B."/>
            <person name="Wells C."/>
            <person name="Kodzius R."/>
            <person name="Shimokawa K."/>
            <person name="Bajic V.B."/>
            <person name="Brenner S.E."/>
            <person name="Batalov S."/>
            <person name="Forrest A.R."/>
            <person name="Zavolan M."/>
            <person name="Davis M.J."/>
            <person name="Wilming L.G."/>
            <person name="Aidinis V."/>
            <person name="Allen J.E."/>
            <person name="Ambesi-Impiombato A."/>
            <person name="Apweiler R."/>
            <person name="Aturaliya R.N."/>
            <person name="Bailey T.L."/>
            <person name="Bansal M."/>
            <person name="Baxter L."/>
            <person name="Beisel K.W."/>
            <person name="Bersano T."/>
            <person name="Bono H."/>
            <person name="Chalk A.M."/>
            <person name="Chiu K.P."/>
            <person name="Choudhary V."/>
            <person name="Christoffels A."/>
            <person name="Clutterbuck D.R."/>
            <person name="Crowe M.L."/>
            <person name="Dalla E."/>
            <person name="Dalrymple B.P."/>
            <person name="de Bono B."/>
            <person name="Della Gatta G."/>
            <person name="di Bernardo D."/>
            <person name="Down T."/>
            <person name="Engstrom P."/>
            <person name="Fagiolini M."/>
            <person name="Faulkner G."/>
            <person name="Fletcher C.F."/>
            <person name="Fukushima T."/>
            <person name="Furuno M."/>
            <person name="Futaki S."/>
            <person name="Gariboldi M."/>
            <person name="Georgii-Hemming P."/>
            <person name="Gingeras T.R."/>
            <person name="Gojobori T."/>
            <person name="Green R.E."/>
            <person name="Gustincich S."/>
            <person name="Harbers M."/>
            <person name="Hayashi Y."/>
            <person name="Hensch T.K."/>
            <person name="Hirokawa N."/>
            <person name="Hill D."/>
            <person name="Huminiecki L."/>
            <person name="Iacono M."/>
            <person name="Ikeo K."/>
            <person name="Iwama A."/>
            <person name="Ishikawa T."/>
            <person name="Jakt M."/>
            <person name="Kanapin A."/>
            <person name="Katoh M."/>
            <person name="Kawasawa Y."/>
            <person name="Kelso J."/>
            <person name="Kitamura H."/>
            <person name="Kitano H."/>
            <person name="Kollias G."/>
            <person name="Krishnan S.P."/>
            <person name="Kruger A."/>
            <person name="Kummerfeld S.K."/>
            <person name="Kurochkin I.V."/>
            <person name="Lareau L.F."/>
            <person name="Lazarevic D."/>
            <person name="Lipovich L."/>
            <person name="Liu J."/>
            <person name="Liuni S."/>
            <person name="McWilliam S."/>
            <person name="Madan Babu M."/>
            <person name="Madera M."/>
            <person name="Marchionni L."/>
            <person name="Matsuda H."/>
            <person name="Matsuzawa S."/>
            <person name="Miki H."/>
            <person name="Mignone F."/>
            <person name="Miyake S."/>
            <person name="Morris K."/>
            <person name="Mottagui-Tabar S."/>
            <person name="Mulder N."/>
            <person name="Nakano N."/>
            <person name="Nakauchi H."/>
            <person name="Ng P."/>
            <person name="Nilsson R."/>
            <person name="Nishiguchi S."/>
            <person name="Nishikawa S."/>
            <person name="Nori F."/>
            <person name="Ohara O."/>
            <person name="Okazaki Y."/>
            <person name="Orlando V."/>
            <person name="Pang K.C."/>
            <person name="Pavan W.J."/>
            <person name="Pavesi G."/>
            <person name="Pesole G."/>
            <person name="Petrovsky N."/>
            <person name="Piazza S."/>
            <person name="Reed J."/>
            <person name="Reid J.F."/>
            <person name="Ring B.Z."/>
            <person name="Ringwald M."/>
            <person name="Rost B."/>
            <person name="Ruan Y."/>
            <person name="Salzberg S.L."/>
            <person name="Sandelin A."/>
            <person name="Schneider C."/>
            <person name="Schoenbach C."/>
            <person name="Sekiguchi K."/>
            <person name="Semple C.A."/>
            <person name="Seno S."/>
            <person name="Sessa L."/>
            <person name="Sheng Y."/>
            <person name="Shibata Y."/>
            <person name="Shimada H."/>
            <person name="Shimada K."/>
            <person name="Silva D."/>
            <person name="Sinclair B."/>
            <person name="Sperling S."/>
            <person name="Stupka E."/>
            <person name="Sugiura K."/>
            <person name="Sultana R."/>
            <person name="Takenaka Y."/>
            <person name="Taki K."/>
            <person name="Tammoja K."/>
            <person name="Tan S.L."/>
            <person name="Tang S."/>
            <person name="Taylor M.S."/>
            <person name="Tegner J."/>
            <person name="Teichmann S.A."/>
            <person name="Ueda H.R."/>
            <person name="van Nimwegen E."/>
            <person name="Verardo R."/>
            <person name="Wei C.L."/>
            <person name="Yagi K."/>
            <person name="Yamanishi H."/>
            <person name="Zabarovsky E."/>
            <person name="Zhu S."/>
            <person name="Zimmer A."/>
            <person name="Hide W."/>
            <person name="Bult C."/>
            <person name="Grimmond S.M."/>
            <person name="Teasdale R.D."/>
            <person name="Liu E.T."/>
            <person name="Brusic V."/>
            <person name="Quackenbush J."/>
            <person name="Wahlestedt C."/>
            <person name="Mattick J.S."/>
            <person name="Hume D.A."/>
            <person name="Kai C."/>
            <person name="Sasaki D."/>
            <person name="Tomaru Y."/>
            <person name="Fukuda S."/>
            <person name="Kanamori-Katayama M."/>
            <person name="Suzuki M."/>
            <person name="Aoki J."/>
            <person name="Arakawa T."/>
            <person name="Iida J."/>
            <person name="Imamura K."/>
            <person name="Itoh M."/>
            <person name="Kato T."/>
            <person name="Kawaji H."/>
            <person name="Kawagashira N."/>
            <person name="Kawashima T."/>
            <person name="Kojima M."/>
            <person name="Kondo S."/>
            <person name="Konno H."/>
            <person name="Nakano K."/>
            <person name="Ninomiya N."/>
            <person name="Nishio T."/>
            <person name="Okada M."/>
            <person name="Plessy C."/>
            <person name="Shibata K."/>
            <person name="Shiraki T."/>
            <person name="Suzuki S."/>
            <person name="Tagami M."/>
            <person name="Waki K."/>
            <person name="Watahiki A."/>
            <person name="Okamura-Oho Y."/>
            <person name="Suzuki H."/>
            <person name="Kawai J."/>
            <person name="Hayashizaki Y."/>
        </authorList>
    </citation>
    <scope>NUCLEOTIDE SEQUENCE [LARGE SCALE MRNA]</scope>
    <source>
        <strain>C57BL/6J</strain>
        <tissue>Testis</tissue>
    </source>
</reference>
<reference key="2">
    <citation type="journal article" date="2004" name="Genome Res.">
        <title>The status, quality, and expansion of the NIH full-length cDNA project: the Mammalian Gene Collection (MGC).</title>
        <authorList>
            <consortium name="The MGC Project Team"/>
        </authorList>
    </citation>
    <scope>NUCLEOTIDE SEQUENCE [LARGE SCALE MRNA]</scope>
    <source>
        <tissue>Limb</tissue>
    </source>
</reference>
<accession>Q8BG80</accession>
<protein>
    <recommendedName>
        <fullName>F-box only protein 46</fullName>
    </recommendedName>
    <alternativeName>
        <fullName>F-box only protein 34-like</fullName>
    </alternativeName>
</protein>
<keyword id="KW-0597">Phosphoprotein</keyword>
<keyword id="KW-1185">Reference proteome</keyword>
<keyword id="KW-0832">Ubl conjugation</keyword>
<keyword id="KW-0833">Ubl conjugation pathway</keyword>
<gene>
    <name type="primary">Fbxo46</name>
    <name type="synonym">Fbx46</name>
    <name type="synonym">Fbxo34l</name>
</gene>
<feature type="chain" id="PRO_0000119951" description="F-box only protein 46">
    <location>
        <begin position="1"/>
        <end position="603"/>
    </location>
</feature>
<feature type="domain" description="F-box" evidence="3">
    <location>
        <begin position="470"/>
        <end position="522"/>
    </location>
</feature>
<feature type="region of interest" description="Disordered" evidence="4">
    <location>
        <begin position="18"/>
        <end position="54"/>
    </location>
</feature>
<feature type="region of interest" description="Disordered" evidence="4">
    <location>
        <begin position="113"/>
        <end position="165"/>
    </location>
</feature>
<feature type="region of interest" description="Disordered" evidence="4">
    <location>
        <begin position="235"/>
        <end position="301"/>
    </location>
</feature>
<feature type="region of interest" description="Disordered" evidence="4">
    <location>
        <begin position="332"/>
        <end position="359"/>
    </location>
</feature>
<feature type="region of interest" description="Disordered" evidence="4">
    <location>
        <begin position="412"/>
        <end position="442"/>
    </location>
</feature>
<feature type="compositionally biased region" description="Pro residues" evidence="4">
    <location>
        <begin position="347"/>
        <end position="356"/>
    </location>
</feature>
<feature type="compositionally biased region" description="Pro residues" evidence="4">
    <location>
        <begin position="417"/>
        <end position="426"/>
    </location>
</feature>
<feature type="modified residue" description="Phosphoserine" evidence="2">
    <location>
        <position position="21"/>
    </location>
</feature>
<feature type="modified residue" description="Phosphoserine" evidence="2">
    <location>
        <position position="67"/>
    </location>
</feature>
<feature type="modified residue" description="Phosphothreonine" evidence="2">
    <location>
        <position position="347"/>
    </location>
</feature>